<accession>A1JS16</accession>
<name>RS8_YERE8</name>
<feature type="chain" id="PRO_0000290962" description="Small ribosomal subunit protein uS8">
    <location>
        <begin position="1"/>
        <end position="130"/>
    </location>
</feature>
<gene>
    <name evidence="1" type="primary">rpsH</name>
    <name type="ordered locus">YE3909</name>
</gene>
<sequence length="130" mass="14081">MSMQDPIADMLTRIRNGQSANKVAVTMPSSKLKVAIANVLKEEGFIEDFKVEGDAKPVLELALKYFQGKAVVESIQRISRPGLRIYKKKDELPKVMAGLGIAVISTSKGVMTDRAARQAGLGGEIICYVA</sequence>
<comment type="function">
    <text evidence="1">One of the primary rRNA binding proteins, it binds directly to 16S rRNA central domain where it helps coordinate assembly of the platform of the 30S subunit.</text>
</comment>
<comment type="subunit">
    <text evidence="1">Part of the 30S ribosomal subunit. Contacts proteins S5 and S12.</text>
</comment>
<comment type="similarity">
    <text evidence="1">Belongs to the universal ribosomal protein uS8 family.</text>
</comment>
<keyword id="KW-0687">Ribonucleoprotein</keyword>
<keyword id="KW-0689">Ribosomal protein</keyword>
<keyword id="KW-0694">RNA-binding</keyword>
<keyword id="KW-0699">rRNA-binding</keyword>
<dbReference type="EMBL" id="AM286415">
    <property type="protein sequence ID" value="CAL13928.1"/>
    <property type="molecule type" value="Genomic_DNA"/>
</dbReference>
<dbReference type="RefSeq" id="WP_005174622.1">
    <property type="nucleotide sequence ID" value="NC_008800.1"/>
</dbReference>
<dbReference type="RefSeq" id="YP_001008054.1">
    <property type="nucleotide sequence ID" value="NC_008800.1"/>
</dbReference>
<dbReference type="SMR" id="A1JS16"/>
<dbReference type="KEGG" id="yen:YE3909"/>
<dbReference type="PATRIC" id="fig|393305.7.peg.4159"/>
<dbReference type="eggNOG" id="COG0096">
    <property type="taxonomic scope" value="Bacteria"/>
</dbReference>
<dbReference type="HOGENOM" id="CLU_098428_0_0_6"/>
<dbReference type="OrthoDB" id="9802617at2"/>
<dbReference type="Proteomes" id="UP000000642">
    <property type="component" value="Chromosome"/>
</dbReference>
<dbReference type="GO" id="GO:1990904">
    <property type="term" value="C:ribonucleoprotein complex"/>
    <property type="evidence" value="ECO:0007669"/>
    <property type="project" value="UniProtKB-KW"/>
</dbReference>
<dbReference type="GO" id="GO:0005840">
    <property type="term" value="C:ribosome"/>
    <property type="evidence" value="ECO:0007669"/>
    <property type="project" value="UniProtKB-KW"/>
</dbReference>
<dbReference type="GO" id="GO:0019843">
    <property type="term" value="F:rRNA binding"/>
    <property type="evidence" value="ECO:0007669"/>
    <property type="project" value="UniProtKB-UniRule"/>
</dbReference>
<dbReference type="GO" id="GO:0003735">
    <property type="term" value="F:structural constituent of ribosome"/>
    <property type="evidence" value="ECO:0007669"/>
    <property type="project" value="InterPro"/>
</dbReference>
<dbReference type="GO" id="GO:0006412">
    <property type="term" value="P:translation"/>
    <property type="evidence" value="ECO:0007669"/>
    <property type="project" value="UniProtKB-UniRule"/>
</dbReference>
<dbReference type="FunFam" id="3.30.1370.30:FF:000003">
    <property type="entry name" value="30S ribosomal protein S8"/>
    <property type="match status" value="1"/>
</dbReference>
<dbReference type="FunFam" id="3.30.1490.10:FF:000001">
    <property type="entry name" value="30S ribosomal protein S8"/>
    <property type="match status" value="1"/>
</dbReference>
<dbReference type="Gene3D" id="3.30.1370.30">
    <property type="match status" value="1"/>
</dbReference>
<dbReference type="Gene3D" id="3.30.1490.10">
    <property type="match status" value="1"/>
</dbReference>
<dbReference type="HAMAP" id="MF_01302_B">
    <property type="entry name" value="Ribosomal_uS8_B"/>
    <property type="match status" value="1"/>
</dbReference>
<dbReference type="InterPro" id="IPR000630">
    <property type="entry name" value="Ribosomal_uS8"/>
</dbReference>
<dbReference type="InterPro" id="IPR047863">
    <property type="entry name" value="Ribosomal_uS8_CS"/>
</dbReference>
<dbReference type="InterPro" id="IPR035987">
    <property type="entry name" value="Ribosomal_uS8_sf"/>
</dbReference>
<dbReference type="NCBIfam" id="NF001109">
    <property type="entry name" value="PRK00136.1"/>
    <property type="match status" value="1"/>
</dbReference>
<dbReference type="PANTHER" id="PTHR11758">
    <property type="entry name" value="40S RIBOSOMAL PROTEIN S15A"/>
    <property type="match status" value="1"/>
</dbReference>
<dbReference type="Pfam" id="PF00410">
    <property type="entry name" value="Ribosomal_S8"/>
    <property type="match status" value="1"/>
</dbReference>
<dbReference type="SUPFAM" id="SSF56047">
    <property type="entry name" value="Ribosomal protein S8"/>
    <property type="match status" value="1"/>
</dbReference>
<dbReference type="PROSITE" id="PS00053">
    <property type="entry name" value="RIBOSOMAL_S8"/>
    <property type="match status" value="1"/>
</dbReference>
<organism>
    <name type="scientific">Yersinia enterocolitica serotype O:8 / biotype 1B (strain NCTC 13174 / 8081)</name>
    <dbReference type="NCBI Taxonomy" id="393305"/>
    <lineage>
        <taxon>Bacteria</taxon>
        <taxon>Pseudomonadati</taxon>
        <taxon>Pseudomonadota</taxon>
        <taxon>Gammaproteobacteria</taxon>
        <taxon>Enterobacterales</taxon>
        <taxon>Yersiniaceae</taxon>
        <taxon>Yersinia</taxon>
    </lineage>
</organism>
<proteinExistence type="inferred from homology"/>
<protein>
    <recommendedName>
        <fullName evidence="1">Small ribosomal subunit protein uS8</fullName>
    </recommendedName>
    <alternativeName>
        <fullName evidence="2">30S ribosomal protein S8</fullName>
    </alternativeName>
</protein>
<reference key="1">
    <citation type="journal article" date="2006" name="PLoS Genet.">
        <title>The complete genome sequence and comparative genome analysis of the high pathogenicity Yersinia enterocolitica strain 8081.</title>
        <authorList>
            <person name="Thomson N.R."/>
            <person name="Howard S."/>
            <person name="Wren B.W."/>
            <person name="Holden M.T.G."/>
            <person name="Crossman L."/>
            <person name="Challis G.L."/>
            <person name="Churcher C."/>
            <person name="Mungall K."/>
            <person name="Brooks K."/>
            <person name="Chillingworth T."/>
            <person name="Feltwell T."/>
            <person name="Abdellah Z."/>
            <person name="Hauser H."/>
            <person name="Jagels K."/>
            <person name="Maddison M."/>
            <person name="Moule S."/>
            <person name="Sanders M."/>
            <person name="Whitehead S."/>
            <person name="Quail M.A."/>
            <person name="Dougan G."/>
            <person name="Parkhill J."/>
            <person name="Prentice M.B."/>
        </authorList>
    </citation>
    <scope>NUCLEOTIDE SEQUENCE [LARGE SCALE GENOMIC DNA]</scope>
    <source>
        <strain>NCTC 13174 / 8081</strain>
    </source>
</reference>
<evidence type="ECO:0000255" key="1">
    <source>
        <dbReference type="HAMAP-Rule" id="MF_01302"/>
    </source>
</evidence>
<evidence type="ECO:0000305" key="2"/>